<keyword id="KW-0210">Decarboxylase</keyword>
<keyword id="KW-0456">Lyase</keyword>
<keyword id="KW-0665">Pyrimidine biosynthesis</keyword>
<reference key="1">
    <citation type="journal article" date="2009" name="Infect. Immun.">
        <title>Comparative genomics reveal extensive transposon-mediated genomic plasticity and diversity among potential effector proteins within the genus Coxiella.</title>
        <authorList>
            <person name="Beare P.A."/>
            <person name="Unsworth N."/>
            <person name="Andoh M."/>
            <person name="Voth D.E."/>
            <person name="Omsland A."/>
            <person name="Gilk S.D."/>
            <person name="Williams K.P."/>
            <person name="Sobral B.W."/>
            <person name="Kupko J.J. III"/>
            <person name="Porcella S.F."/>
            <person name="Samuel J.E."/>
            <person name="Heinzen R.A."/>
        </authorList>
    </citation>
    <scope>NUCLEOTIDE SEQUENCE [LARGE SCALE GENOMIC DNA]</scope>
    <source>
        <strain>CbuK_Q154</strain>
    </source>
</reference>
<protein>
    <recommendedName>
        <fullName evidence="1">Orotidine 5'-phosphate decarboxylase</fullName>
        <ecNumber evidence="1">4.1.1.23</ecNumber>
    </recommendedName>
    <alternativeName>
        <fullName evidence="1">OMP decarboxylase</fullName>
        <shortName evidence="1">OMPDCase</shortName>
        <shortName evidence="1">OMPdecase</shortName>
    </alternativeName>
</protein>
<comment type="function">
    <text evidence="1">Catalyzes the decarboxylation of orotidine 5'-monophosphate (OMP) to uridine 5'-monophosphate (UMP).</text>
</comment>
<comment type="catalytic activity">
    <reaction evidence="1">
        <text>orotidine 5'-phosphate + H(+) = UMP + CO2</text>
        <dbReference type="Rhea" id="RHEA:11596"/>
        <dbReference type="ChEBI" id="CHEBI:15378"/>
        <dbReference type="ChEBI" id="CHEBI:16526"/>
        <dbReference type="ChEBI" id="CHEBI:57538"/>
        <dbReference type="ChEBI" id="CHEBI:57865"/>
        <dbReference type="EC" id="4.1.1.23"/>
    </reaction>
</comment>
<comment type="pathway">
    <text evidence="1">Pyrimidine metabolism; UMP biosynthesis via de novo pathway; UMP from orotate: step 2/2.</text>
</comment>
<comment type="subunit">
    <text evidence="1">Homodimer.</text>
</comment>
<comment type="similarity">
    <text evidence="1">Belongs to the OMP decarboxylase family. Type 1 subfamily.</text>
</comment>
<dbReference type="EC" id="4.1.1.23" evidence="1"/>
<dbReference type="EMBL" id="CP001020">
    <property type="protein sequence ID" value="ACJ20486.1"/>
    <property type="molecule type" value="Genomic_DNA"/>
</dbReference>
<dbReference type="RefSeq" id="WP_005771152.1">
    <property type="nucleotide sequence ID" value="NC_011528.1"/>
</dbReference>
<dbReference type="SMR" id="B6J887"/>
<dbReference type="KEGG" id="cbc:CbuK_1305"/>
<dbReference type="HOGENOM" id="CLU_067069_0_0_6"/>
<dbReference type="UniPathway" id="UPA00070">
    <property type="reaction ID" value="UER00120"/>
</dbReference>
<dbReference type="GO" id="GO:0005829">
    <property type="term" value="C:cytosol"/>
    <property type="evidence" value="ECO:0007669"/>
    <property type="project" value="TreeGrafter"/>
</dbReference>
<dbReference type="GO" id="GO:0004590">
    <property type="term" value="F:orotidine-5'-phosphate decarboxylase activity"/>
    <property type="evidence" value="ECO:0007669"/>
    <property type="project" value="UniProtKB-UniRule"/>
</dbReference>
<dbReference type="GO" id="GO:0006207">
    <property type="term" value="P:'de novo' pyrimidine nucleobase biosynthetic process"/>
    <property type="evidence" value="ECO:0007669"/>
    <property type="project" value="InterPro"/>
</dbReference>
<dbReference type="GO" id="GO:0044205">
    <property type="term" value="P:'de novo' UMP biosynthetic process"/>
    <property type="evidence" value="ECO:0007669"/>
    <property type="project" value="UniProtKB-UniRule"/>
</dbReference>
<dbReference type="CDD" id="cd04725">
    <property type="entry name" value="OMP_decarboxylase_like"/>
    <property type="match status" value="1"/>
</dbReference>
<dbReference type="FunFam" id="3.20.20.70:FF:000015">
    <property type="entry name" value="Orotidine 5'-phosphate decarboxylase"/>
    <property type="match status" value="1"/>
</dbReference>
<dbReference type="Gene3D" id="3.20.20.70">
    <property type="entry name" value="Aldolase class I"/>
    <property type="match status" value="1"/>
</dbReference>
<dbReference type="HAMAP" id="MF_01200_B">
    <property type="entry name" value="OMPdecase_type1_B"/>
    <property type="match status" value="1"/>
</dbReference>
<dbReference type="InterPro" id="IPR013785">
    <property type="entry name" value="Aldolase_TIM"/>
</dbReference>
<dbReference type="InterPro" id="IPR014732">
    <property type="entry name" value="OMPdecase"/>
</dbReference>
<dbReference type="InterPro" id="IPR018089">
    <property type="entry name" value="OMPdecase_AS"/>
</dbReference>
<dbReference type="InterPro" id="IPR047596">
    <property type="entry name" value="OMPdecase_bac"/>
</dbReference>
<dbReference type="InterPro" id="IPR001754">
    <property type="entry name" value="OMPdeCOase_dom"/>
</dbReference>
<dbReference type="InterPro" id="IPR011060">
    <property type="entry name" value="RibuloseP-bd_barrel"/>
</dbReference>
<dbReference type="NCBIfam" id="NF001273">
    <property type="entry name" value="PRK00230.1"/>
    <property type="match status" value="1"/>
</dbReference>
<dbReference type="NCBIfam" id="TIGR01740">
    <property type="entry name" value="pyrF"/>
    <property type="match status" value="1"/>
</dbReference>
<dbReference type="PANTHER" id="PTHR32119">
    <property type="entry name" value="OROTIDINE 5'-PHOSPHATE DECARBOXYLASE"/>
    <property type="match status" value="1"/>
</dbReference>
<dbReference type="PANTHER" id="PTHR32119:SF2">
    <property type="entry name" value="OROTIDINE 5'-PHOSPHATE DECARBOXYLASE"/>
    <property type="match status" value="1"/>
</dbReference>
<dbReference type="Pfam" id="PF00215">
    <property type="entry name" value="OMPdecase"/>
    <property type="match status" value="1"/>
</dbReference>
<dbReference type="SMART" id="SM00934">
    <property type="entry name" value="OMPdecase"/>
    <property type="match status" value="1"/>
</dbReference>
<dbReference type="SUPFAM" id="SSF51366">
    <property type="entry name" value="Ribulose-phoshate binding barrel"/>
    <property type="match status" value="1"/>
</dbReference>
<dbReference type="PROSITE" id="PS00156">
    <property type="entry name" value="OMPDECASE"/>
    <property type="match status" value="1"/>
</dbReference>
<proteinExistence type="inferred from homology"/>
<feature type="chain" id="PRO_1000138517" description="Orotidine 5'-phosphate decarboxylase">
    <location>
        <begin position="1"/>
        <end position="236"/>
    </location>
</feature>
<feature type="active site" description="Proton donor" evidence="1">
    <location>
        <position position="64"/>
    </location>
</feature>
<feature type="binding site" evidence="1">
    <location>
        <position position="13"/>
    </location>
    <ligand>
        <name>substrate</name>
    </ligand>
</feature>
<feature type="binding site" evidence="1">
    <location>
        <position position="35"/>
    </location>
    <ligand>
        <name>substrate</name>
    </ligand>
</feature>
<feature type="binding site" evidence="1">
    <location>
        <begin position="62"/>
        <end position="71"/>
    </location>
    <ligand>
        <name>substrate</name>
    </ligand>
</feature>
<feature type="binding site" evidence="1">
    <location>
        <position position="123"/>
    </location>
    <ligand>
        <name>substrate</name>
    </ligand>
</feature>
<feature type="binding site" evidence="1">
    <location>
        <position position="184"/>
    </location>
    <ligand>
        <name>substrate</name>
    </ligand>
</feature>
<feature type="binding site" evidence="1">
    <location>
        <position position="193"/>
    </location>
    <ligand>
        <name>substrate</name>
    </ligand>
</feature>
<feature type="binding site" evidence="1">
    <location>
        <position position="213"/>
    </location>
    <ligand>
        <name>substrate</name>
    </ligand>
</feature>
<feature type="binding site" evidence="1">
    <location>
        <position position="214"/>
    </location>
    <ligand>
        <name>substrate</name>
    </ligand>
</feature>
<organism>
    <name type="scientific">Coxiella burnetii (strain CbuK_Q154)</name>
    <name type="common">Coxiella burnetii (strain Q154)</name>
    <dbReference type="NCBI Taxonomy" id="434924"/>
    <lineage>
        <taxon>Bacteria</taxon>
        <taxon>Pseudomonadati</taxon>
        <taxon>Pseudomonadota</taxon>
        <taxon>Gammaproteobacteria</taxon>
        <taxon>Legionellales</taxon>
        <taxon>Coxiellaceae</taxon>
        <taxon>Coxiella</taxon>
    </lineage>
</organism>
<name>PYRF_COXB1</name>
<evidence type="ECO:0000255" key="1">
    <source>
        <dbReference type="HAMAP-Rule" id="MF_01200"/>
    </source>
</evidence>
<gene>
    <name evidence="1" type="primary">pyrF</name>
    <name type="ordered locus">CbuK_1305</name>
</gene>
<accession>B6J887</accession>
<sequence length="236" mass="25849">MEKPDPKVIVAIDAGTVEQARAQINPLTPELCHLKIGSILFTRYGPAFVEELMQKGYRIFLDLKFYDIPQTVAGACRAVAELGVWMMNIHISGGRTMMETVVNALQSITLKEKPLLIGVTILTSLDGSDLKTLGIQEKVPDIVCRMATLAKSAGLDGVVCSAQEAALLRKQFDRNFLLVTPGIRLETDEKGDQKRVMTPRAAIQAGSDYLVIGRPITQSTDPLKALEAIDKDIKTR</sequence>